<gene>
    <name type="primary">P2RY1</name>
</gene>
<comment type="function">
    <text evidence="2 5">Receptor for extracellular adenine nucleotides such as ADP (PubMed:7626079). In platelets, binding to ADP leads to mobilization of intracellular calcium ions via activation of phospholipase C, a change in platelet shape, and ultimately platelet aggregation (By similarity).</text>
</comment>
<comment type="subcellular location">
    <subcellularLocation>
        <location evidence="5">Cell membrane</location>
        <topology evidence="1">Multi-pass membrane protein</topology>
    </subcellularLocation>
</comment>
<comment type="similarity">
    <text evidence="4">Belongs to the G-protein coupled receptor 1 family.</text>
</comment>
<proteinExistence type="evidence at transcript level"/>
<reference key="1">
    <citation type="journal article" date="1995" name="Biochem. Biophys. Res. Commun.">
        <title>Cloning and characterisation of a bovine P2Y receptor.</title>
        <authorList>
            <person name="Henderson D.J."/>
            <person name="Elliot D.G."/>
            <person name="Smith G.M."/>
            <person name="Webb T.E."/>
            <person name="Dainty I.A."/>
        </authorList>
    </citation>
    <scope>NUCLEOTIDE SEQUENCE [MRNA]</scope>
    <scope>FUNCTION</scope>
    <scope>SUBCELLULAR LOCATION</scope>
    <source>
        <tissue>Aortic endothelium</tissue>
    </source>
</reference>
<reference key="2">
    <citation type="journal article" date="1998" name="Neurobiol. Dis.">
        <title>Cloning and expression of a P2y purinoceptor from the adult bovine corpus callosum.</title>
        <authorList>
            <person name="Deng G."/>
            <person name="Matute C."/>
            <person name="Kumar C.K."/>
            <person name="Fogarty D.J."/>
            <person name="Miledi R."/>
        </authorList>
    </citation>
    <scope>NUCLEOTIDE SEQUENCE [MRNA]</scope>
    <source>
        <tissue>Corpus callosum</tissue>
    </source>
</reference>
<sequence length="373" mass="42288">MTEVLWPAVPNGTDTAFLADPGSPWGNSTVTSTAAVASPFKCALTKTGFQFYYLPAVYILVFIIGFLGNSVAIWMFVFHMKPWSGISVYMFNLALADFLYVLTLPALIFYYFNKTDWIFGDAMCKLQRFIFHVNLYGSILFLTCISAHRYSGVVYPLKSLGRLKKKNAVYISVLVWLIVVVGISPILFYSGTGIRKNKTITCYDTTSDEYLRSYFIYSMCTTVAMFCVPLVLILGCYGLIVRALIYKDLDNSPLRRKSIYLVIIVLTVFAVSYIPFHVMKTMNLRARLDFQTPEMCAFNDRVYATYQVTRGLASLNSCVDPILYFLAGDTFRRRLSRATRKASRRSEANLQSKSEDMTLNILSEFKQNGDTSL</sequence>
<feature type="chain" id="PRO_0000070004" description="P2Y purinoceptor 1">
    <location>
        <begin position="1"/>
        <end position="373"/>
    </location>
</feature>
<feature type="topological domain" description="Extracellular" evidence="6">
    <location>
        <begin position="1"/>
        <end position="51"/>
    </location>
</feature>
<feature type="transmembrane region" description="Helical; Name=1" evidence="1">
    <location>
        <begin position="52"/>
        <end position="74"/>
    </location>
</feature>
<feature type="topological domain" description="Cytoplasmic" evidence="6">
    <location>
        <begin position="75"/>
        <end position="87"/>
    </location>
</feature>
<feature type="transmembrane region" description="Helical; Name=2" evidence="1">
    <location>
        <begin position="88"/>
        <end position="109"/>
    </location>
</feature>
<feature type="topological domain" description="Extracellular" evidence="6">
    <location>
        <begin position="110"/>
        <end position="125"/>
    </location>
</feature>
<feature type="transmembrane region" description="Helical; Name=3" evidence="1">
    <location>
        <begin position="126"/>
        <end position="147"/>
    </location>
</feature>
<feature type="topological domain" description="Cytoplasmic" evidence="6">
    <location>
        <begin position="148"/>
        <end position="166"/>
    </location>
</feature>
<feature type="transmembrane region" description="Helical; Name=4" evidence="1">
    <location>
        <begin position="167"/>
        <end position="188"/>
    </location>
</feature>
<feature type="topological domain" description="Extracellular" evidence="6">
    <location>
        <begin position="189"/>
        <end position="214"/>
    </location>
</feature>
<feature type="transmembrane region" description="Helical; Name=5" evidence="1">
    <location>
        <begin position="215"/>
        <end position="237"/>
    </location>
</feature>
<feature type="topological domain" description="Cytoplasmic" evidence="6">
    <location>
        <begin position="238"/>
        <end position="260"/>
    </location>
</feature>
<feature type="transmembrane region" description="Helical; Name=6" evidence="1">
    <location>
        <begin position="261"/>
        <end position="284"/>
    </location>
</feature>
<feature type="topological domain" description="Extracellular" evidence="6">
    <location>
        <begin position="285"/>
        <end position="303"/>
    </location>
</feature>
<feature type="transmembrane region" description="Helical; Name=7" evidence="1">
    <location>
        <begin position="304"/>
        <end position="325"/>
    </location>
</feature>
<feature type="topological domain" description="Cytoplasmic" evidence="6">
    <location>
        <begin position="326"/>
        <end position="373"/>
    </location>
</feature>
<feature type="binding site" evidence="1">
    <location>
        <position position="46"/>
    </location>
    <ligand>
        <name>ADP</name>
        <dbReference type="ChEBI" id="CHEBI:456216"/>
    </ligand>
</feature>
<feature type="binding site" evidence="1">
    <location>
        <begin position="203"/>
        <end position="205"/>
    </location>
    <ligand>
        <name>ADP</name>
        <dbReference type="ChEBI" id="CHEBI:456216"/>
    </ligand>
</feature>
<feature type="binding site" evidence="1">
    <location>
        <begin position="283"/>
        <end position="287"/>
    </location>
    <ligand>
        <name>ADP</name>
        <dbReference type="ChEBI" id="CHEBI:456216"/>
    </ligand>
</feature>
<feature type="binding site" evidence="1">
    <location>
        <begin position="303"/>
        <end position="306"/>
    </location>
    <ligand>
        <name>ADP</name>
        <dbReference type="ChEBI" id="CHEBI:456216"/>
    </ligand>
</feature>
<feature type="binding site" evidence="1">
    <location>
        <position position="310"/>
    </location>
    <ligand>
        <name>ADP</name>
        <dbReference type="ChEBI" id="CHEBI:456216"/>
    </ligand>
</feature>
<feature type="glycosylation site" description="N-linked (GlcNAc...) asparagine" evidence="3">
    <location>
        <position position="11"/>
    </location>
</feature>
<feature type="glycosylation site" description="N-linked (GlcNAc...) asparagine" evidence="3">
    <location>
        <position position="27"/>
    </location>
</feature>
<feature type="glycosylation site" description="N-linked (GlcNAc...) asparagine" evidence="3">
    <location>
        <position position="113"/>
    </location>
</feature>
<feature type="glycosylation site" description="N-linked (GlcNAc...) asparagine" evidence="3">
    <location>
        <position position="197"/>
    </location>
</feature>
<feature type="disulfide bond" evidence="1">
    <location>
        <begin position="42"/>
        <end position="296"/>
    </location>
</feature>
<feature type="disulfide bond" evidence="4">
    <location>
        <begin position="124"/>
        <end position="202"/>
    </location>
</feature>
<keyword id="KW-0067">ATP-binding</keyword>
<keyword id="KW-1003">Cell membrane</keyword>
<keyword id="KW-1015">Disulfide bond</keyword>
<keyword id="KW-0297">G-protein coupled receptor</keyword>
<keyword id="KW-0325">Glycoprotein</keyword>
<keyword id="KW-0472">Membrane</keyword>
<keyword id="KW-0547">Nucleotide-binding</keyword>
<keyword id="KW-0675">Receptor</keyword>
<keyword id="KW-1185">Reference proteome</keyword>
<keyword id="KW-0807">Transducer</keyword>
<keyword id="KW-0812">Transmembrane</keyword>
<keyword id="KW-1133">Transmembrane helix</keyword>
<name>P2RY1_BOVIN</name>
<dbReference type="EMBL" id="X87628">
    <property type="protein sequence ID" value="CAA60958.1"/>
    <property type="molecule type" value="mRNA"/>
</dbReference>
<dbReference type="EMBL" id="U34041">
    <property type="protein sequence ID" value="AAC78275.1"/>
    <property type="molecule type" value="mRNA"/>
</dbReference>
<dbReference type="PIR" id="JC4162">
    <property type="entry name" value="JC4162"/>
</dbReference>
<dbReference type="RefSeq" id="NP_776835.1">
    <property type="nucleotide sequence ID" value="NM_174410.3"/>
</dbReference>
<dbReference type="SMR" id="P48042"/>
<dbReference type="FunCoup" id="P48042">
    <property type="interactions" value="510"/>
</dbReference>
<dbReference type="STRING" id="9913.ENSBTAP00000001919"/>
<dbReference type="GlyCosmos" id="P48042">
    <property type="glycosylation" value="4 sites, No reported glycans"/>
</dbReference>
<dbReference type="GlyGen" id="P48042">
    <property type="glycosylation" value="4 sites"/>
</dbReference>
<dbReference type="PaxDb" id="9913-ENSBTAP00000001919"/>
<dbReference type="Ensembl" id="ENSBTAT00000001919.4">
    <property type="protein sequence ID" value="ENSBTAP00000001919.2"/>
    <property type="gene ID" value="ENSBTAG00000001465.4"/>
</dbReference>
<dbReference type="Ensembl" id="ENSBTAT00000100582.1">
    <property type="protein sequence ID" value="ENSBTAP00000080123.1"/>
    <property type="gene ID" value="ENSBTAG00000001465.4"/>
</dbReference>
<dbReference type="Ensembl" id="ENSBTAT00000101907.1">
    <property type="protein sequence ID" value="ENSBTAP00000079730.1"/>
    <property type="gene ID" value="ENSBTAG00000001465.4"/>
</dbReference>
<dbReference type="Ensembl" id="ENSBTAT00000122667.1">
    <property type="protein sequence ID" value="ENSBTAP00000079669.1"/>
    <property type="gene ID" value="ENSBTAG00000001465.4"/>
</dbReference>
<dbReference type="GeneID" id="281963"/>
<dbReference type="KEGG" id="bta:281963"/>
<dbReference type="CTD" id="5028"/>
<dbReference type="VEuPathDB" id="HostDB:ENSBTAG00000001465"/>
<dbReference type="VGNC" id="VGNC:32523">
    <property type="gene designation" value="P2RY1"/>
</dbReference>
<dbReference type="eggNOG" id="ENOG502QWPV">
    <property type="taxonomic scope" value="Eukaryota"/>
</dbReference>
<dbReference type="GeneTree" id="ENSGT01030000234621"/>
<dbReference type="HOGENOM" id="CLU_009579_8_2_1"/>
<dbReference type="InParanoid" id="P48042"/>
<dbReference type="OMA" id="GFCVPFI"/>
<dbReference type="OrthoDB" id="8190652at2759"/>
<dbReference type="TreeFam" id="TF350009"/>
<dbReference type="Reactome" id="R-BTA-416476">
    <property type="pathway name" value="G alpha (q) signalling events"/>
</dbReference>
<dbReference type="Reactome" id="R-BTA-417957">
    <property type="pathway name" value="P2Y receptors"/>
</dbReference>
<dbReference type="Reactome" id="R-BTA-418592">
    <property type="pathway name" value="ADP signalling through P2Y purinoceptor 1"/>
</dbReference>
<dbReference type="Proteomes" id="UP000009136">
    <property type="component" value="Chromosome 1"/>
</dbReference>
<dbReference type="Bgee" id="ENSBTAG00000001465">
    <property type="expression patterns" value="Expressed in longissimus thoracis muscle and 98 other cell types or tissues"/>
</dbReference>
<dbReference type="GO" id="GO:0005929">
    <property type="term" value="C:cilium"/>
    <property type="evidence" value="ECO:0007669"/>
    <property type="project" value="Ensembl"/>
</dbReference>
<dbReference type="GO" id="GO:0005886">
    <property type="term" value="C:plasma membrane"/>
    <property type="evidence" value="ECO:0000250"/>
    <property type="project" value="UniProtKB"/>
</dbReference>
<dbReference type="GO" id="GO:0031686">
    <property type="term" value="F:A1 adenosine receptor binding"/>
    <property type="evidence" value="ECO:0000318"/>
    <property type="project" value="GO_Central"/>
</dbReference>
<dbReference type="GO" id="GO:0005524">
    <property type="term" value="F:ATP binding"/>
    <property type="evidence" value="ECO:0000250"/>
    <property type="project" value="UniProtKB"/>
</dbReference>
<dbReference type="GO" id="GO:0001621">
    <property type="term" value="F:G protein-coupled ADP receptor activity"/>
    <property type="evidence" value="ECO:0000250"/>
    <property type="project" value="UniProtKB"/>
</dbReference>
<dbReference type="GO" id="GO:0045031">
    <property type="term" value="F:G protein-coupled ATP receptor activity"/>
    <property type="evidence" value="ECO:0000318"/>
    <property type="project" value="GO_Central"/>
</dbReference>
<dbReference type="GO" id="GO:0071415">
    <property type="term" value="P:cellular response to purine-containing compound"/>
    <property type="evidence" value="ECO:0000250"/>
    <property type="project" value="UniProtKB"/>
</dbReference>
<dbReference type="GO" id="GO:0051649">
    <property type="term" value="P:establishment of localization in cell"/>
    <property type="evidence" value="ECO:0007669"/>
    <property type="project" value="Ensembl"/>
</dbReference>
<dbReference type="GO" id="GO:0006811">
    <property type="term" value="P:monoatomic ion transport"/>
    <property type="evidence" value="ECO:0007669"/>
    <property type="project" value="Ensembl"/>
</dbReference>
<dbReference type="GO" id="GO:0007200">
    <property type="term" value="P:phospholipase C-activating G protein-coupled receptor signaling pathway"/>
    <property type="evidence" value="ECO:0000250"/>
    <property type="project" value="UniProtKB"/>
</dbReference>
<dbReference type="GO" id="GO:0030168">
    <property type="term" value="P:platelet activation"/>
    <property type="evidence" value="ECO:0007669"/>
    <property type="project" value="InterPro"/>
</dbReference>
<dbReference type="GO" id="GO:0043270">
    <property type="term" value="P:positive regulation of monoatomic ion transport"/>
    <property type="evidence" value="ECO:0007669"/>
    <property type="project" value="Ensembl"/>
</dbReference>
<dbReference type="GO" id="GO:0008360">
    <property type="term" value="P:regulation of cell shape"/>
    <property type="evidence" value="ECO:0000250"/>
    <property type="project" value="UniProtKB"/>
</dbReference>
<dbReference type="GO" id="GO:0090075">
    <property type="term" value="P:relaxation of muscle"/>
    <property type="evidence" value="ECO:0007669"/>
    <property type="project" value="InterPro"/>
</dbReference>
<dbReference type="CDD" id="cd15377">
    <property type="entry name" value="7tmA_P2Y1"/>
    <property type="match status" value="1"/>
</dbReference>
<dbReference type="FunFam" id="1.20.1070.10:FF:000017">
    <property type="entry name" value="lysophosphatidic acid receptor 4"/>
    <property type="match status" value="1"/>
</dbReference>
<dbReference type="Gene3D" id="1.20.1070.10">
    <property type="entry name" value="Rhodopsin 7-helix transmembrane proteins"/>
    <property type="match status" value="1"/>
</dbReference>
<dbReference type="InterPro" id="IPR000276">
    <property type="entry name" value="GPCR_Rhodpsn"/>
</dbReference>
<dbReference type="InterPro" id="IPR017452">
    <property type="entry name" value="GPCR_Rhodpsn_7TM"/>
</dbReference>
<dbReference type="InterPro" id="IPR000142">
    <property type="entry name" value="P2Y1_rcpt"/>
</dbReference>
<dbReference type="PANTHER" id="PTHR24231:SF2">
    <property type="entry name" value="P2Y PURINOCEPTOR 1"/>
    <property type="match status" value="1"/>
</dbReference>
<dbReference type="PANTHER" id="PTHR24231">
    <property type="entry name" value="PURINOCEPTOR-RELATED G-PROTEIN COUPLED RECEPTOR"/>
    <property type="match status" value="1"/>
</dbReference>
<dbReference type="Pfam" id="PF00001">
    <property type="entry name" value="7tm_1"/>
    <property type="match status" value="1"/>
</dbReference>
<dbReference type="PRINTS" id="PR00237">
    <property type="entry name" value="GPCRRHODOPSN"/>
</dbReference>
<dbReference type="PRINTS" id="PR00595">
    <property type="entry name" value="P2Y1PRNOCPTR"/>
</dbReference>
<dbReference type="PRINTS" id="PR01157">
    <property type="entry name" value="P2YPURNOCPTR"/>
</dbReference>
<dbReference type="SUPFAM" id="SSF81321">
    <property type="entry name" value="Family A G protein-coupled receptor-like"/>
    <property type="match status" value="1"/>
</dbReference>
<dbReference type="PROSITE" id="PS00237">
    <property type="entry name" value="G_PROTEIN_RECEP_F1_1"/>
    <property type="match status" value="1"/>
</dbReference>
<dbReference type="PROSITE" id="PS50262">
    <property type="entry name" value="G_PROTEIN_RECEP_F1_2"/>
    <property type="match status" value="1"/>
</dbReference>
<organism>
    <name type="scientific">Bos taurus</name>
    <name type="common">Bovine</name>
    <dbReference type="NCBI Taxonomy" id="9913"/>
    <lineage>
        <taxon>Eukaryota</taxon>
        <taxon>Metazoa</taxon>
        <taxon>Chordata</taxon>
        <taxon>Craniata</taxon>
        <taxon>Vertebrata</taxon>
        <taxon>Euteleostomi</taxon>
        <taxon>Mammalia</taxon>
        <taxon>Eutheria</taxon>
        <taxon>Laurasiatheria</taxon>
        <taxon>Artiodactyla</taxon>
        <taxon>Ruminantia</taxon>
        <taxon>Pecora</taxon>
        <taxon>Bovidae</taxon>
        <taxon>Bovinae</taxon>
        <taxon>Bos</taxon>
    </lineage>
</organism>
<evidence type="ECO:0000250" key="1">
    <source>
        <dbReference type="UniProtKB" id="P47900"/>
    </source>
</evidence>
<evidence type="ECO:0000250" key="2">
    <source>
        <dbReference type="UniProtKB" id="P49650"/>
    </source>
</evidence>
<evidence type="ECO:0000255" key="3"/>
<evidence type="ECO:0000255" key="4">
    <source>
        <dbReference type="PROSITE-ProRule" id="PRU00521"/>
    </source>
</evidence>
<evidence type="ECO:0000269" key="5">
    <source>
    </source>
</evidence>
<evidence type="ECO:0000305" key="6"/>
<protein>
    <recommendedName>
        <fullName>P2Y purinoceptor 1</fullName>
        <shortName>P2Y1</shortName>
    </recommendedName>
    <alternativeName>
        <fullName>ATP receptor</fullName>
    </alternativeName>
    <alternativeName>
        <fullName>Purinergic receptor</fullName>
    </alternativeName>
</protein>
<accession>P48042</accession>